<accession>Q57NG9</accession>
<organism>
    <name type="scientific">Salmonella choleraesuis (strain SC-B67)</name>
    <dbReference type="NCBI Taxonomy" id="321314"/>
    <lineage>
        <taxon>Bacteria</taxon>
        <taxon>Pseudomonadati</taxon>
        <taxon>Pseudomonadota</taxon>
        <taxon>Gammaproteobacteria</taxon>
        <taxon>Enterobacterales</taxon>
        <taxon>Enterobacteriaceae</taxon>
        <taxon>Salmonella</taxon>
    </lineage>
</organism>
<evidence type="ECO:0000255" key="1">
    <source>
        <dbReference type="HAMAP-Rule" id="MF_01596"/>
    </source>
</evidence>
<gene>
    <name evidence="1" type="primary">mgrB</name>
    <name type="ordered locus">SCH_1836</name>
</gene>
<feature type="chain" id="PRO_0000330676" description="PhoP/PhoQ regulator MgrB">
    <location>
        <begin position="1"/>
        <end position="47"/>
    </location>
</feature>
<feature type="transmembrane region" description="Helical" evidence="1">
    <location>
        <begin position="6"/>
        <end position="26"/>
    </location>
</feature>
<sequence length="47" mass="5520">MKKFRWVVLGIVVVVCLLLWAQVFNIMCDQDVQFFSGICAINKFIPW</sequence>
<name>MGRB_SALCH</name>
<dbReference type="EMBL" id="AE017220">
    <property type="protein sequence ID" value="AAX65742.1"/>
    <property type="molecule type" value="Genomic_DNA"/>
</dbReference>
<dbReference type="RefSeq" id="WP_000714547.1">
    <property type="nucleotide sequence ID" value="NC_006905.1"/>
</dbReference>
<dbReference type="GeneID" id="66756315"/>
<dbReference type="KEGG" id="sec:SCH_1836"/>
<dbReference type="HOGENOM" id="CLU_208030_1_0_6"/>
<dbReference type="Proteomes" id="UP000000538">
    <property type="component" value="Chromosome"/>
</dbReference>
<dbReference type="GO" id="GO:0005886">
    <property type="term" value="C:plasma membrane"/>
    <property type="evidence" value="ECO:0007669"/>
    <property type="project" value="UniProtKB-SubCell"/>
</dbReference>
<dbReference type="GO" id="GO:0070298">
    <property type="term" value="P:negative regulation of phosphorelay signal transduction system"/>
    <property type="evidence" value="ECO:0007669"/>
    <property type="project" value="UniProtKB-UniRule"/>
</dbReference>
<dbReference type="HAMAP" id="MF_01596">
    <property type="entry name" value="MgrB"/>
    <property type="match status" value="1"/>
</dbReference>
<dbReference type="InterPro" id="IPR020907">
    <property type="entry name" value="MgrB"/>
</dbReference>
<dbReference type="NCBIfam" id="NF007635">
    <property type="entry name" value="PRK10299.1"/>
    <property type="match status" value="1"/>
</dbReference>
<dbReference type="Pfam" id="PF13998">
    <property type="entry name" value="MgrB"/>
    <property type="match status" value="1"/>
</dbReference>
<comment type="function">
    <text evidence="1">PhoP-regulated transcription is redox-sensitive, being activated when the periplasm becomes more reducing. MgrB acts between DsbA/DsbB and PhoP/PhoQ in this pathway. Represses PhoP/PhoQ signaling, possibly by binding to the periplasmic domain of PhoQ, altering its activity and that of downstream effector PhoP.</text>
</comment>
<comment type="subunit">
    <text evidence="1">May form homooligomers. Probably interacts with the periplasmic domain of PhoQ.</text>
</comment>
<comment type="subcellular location">
    <subcellularLocation>
        <location evidence="1">Cell inner membrane</location>
        <topology evidence="1">Single-pass membrane protein</topology>
    </subcellularLocation>
</comment>
<comment type="similarity">
    <text evidence="1">Belongs to the MgrB family.</text>
</comment>
<reference key="1">
    <citation type="journal article" date="2005" name="Nucleic Acids Res.">
        <title>The genome sequence of Salmonella enterica serovar Choleraesuis, a highly invasive and resistant zoonotic pathogen.</title>
        <authorList>
            <person name="Chiu C.-H."/>
            <person name="Tang P."/>
            <person name="Chu C."/>
            <person name="Hu S."/>
            <person name="Bao Q."/>
            <person name="Yu J."/>
            <person name="Chou Y.-Y."/>
            <person name="Wang H.-S."/>
            <person name="Lee Y.-S."/>
        </authorList>
    </citation>
    <scope>NUCLEOTIDE SEQUENCE [LARGE SCALE GENOMIC DNA]</scope>
    <source>
        <strain>SC-B67</strain>
    </source>
</reference>
<proteinExistence type="inferred from homology"/>
<keyword id="KW-0997">Cell inner membrane</keyword>
<keyword id="KW-1003">Cell membrane</keyword>
<keyword id="KW-0472">Membrane</keyword>
<keyword id="KW-0812">Transmembrane</keyword>
<keyword id="KW-1133">Transmembrane helix</keyword>
<protein>
    <recommendedName>
        <fullName evidence="1">PhoP/PhoQ regulator MgrB</fullName>
    </recommendedName>
</protein>